<proteinExistence type="inferred from homology"/>
<reference key="1">
    <citation type="journal article" date="2009" name="J. Bacteriol.">
        <title>Complete genome sequence of the anaerobic, protein-degrading hyperthermophilic crenarchaeon Desulfurococcus kamchatkensis.</title>
        <authorList>
            <person name="Ravin N.V."/>
            <person name="Mardanov A.V."/>
            <person name="Beletsky A.V."/>
            <person name="Kublanov I.V."/>
            <person name="Kolganova T.V."/>
            <person name="Lebedinsky A.V."/>
            <person name="Chernyh N.A."/>
            <person name="Bonch-Osmolovskaya E.A."/>
            <person name="Skryabin K.G."/>
        </authorList>
    </citation>
    <scope>NUCLEOTIDE SEQUENCE [LARGE SCALE GENOMIC DNA]</scope>
    <source>
        <strain>DSM 18924 / JCM 16383 / VKM B-2413 / 1221n</strain>
    </source>
</reference>
<keyword id="KW-0479">Metal-binding</keyword>
<keyword id="KW-0687">Ribonucleoprotein</keyword>
<keyword id="KW-0689">Ribosomal protein</keyword>
<keyword id="KW-0694">RNA-binding</keyword>
<keyword id="KW-0699">rRNA-binding</keyword>
<keyword id="KW-0862">Zinc</keyword>
<keyword id="KW-0863">Zinc-finger</keyword>
<sequence length="103" mass="12055">MCLRVLDLRIPKVIITYCPKCRTHTEHSVTIYKHGKRRSLSEGERRYARKKKGYGSKRKPEQKRFAKVTKKTVLKLKCSKCGYIIHREGIRLKKAELVEVGGR</sequence>
<evidence type="ECO:0000255" key="1">
    <source>
        <dbReference type="HAMAP-Rule" id="MF_01476"/>
    </source>
</evidence>
<evidence type="ECO:0000256" key="2">
    <source>
        <dbReference type="SAM" id="MobiDB-lite"/>
    </source>
</evidence>
<evidence type="ECO:0000305" key="3"/>
<feature type="chain" id="PRO_0000419125" description="Large ribosomal subunit protein eL42">
    <location>
        <begin position="1"/>
        <end position="103"/>
    </location>
</feature>
<feature type="zinc finger region" description="C4-type" evidence="1">
    <location>
        <begin position="18"/>
        <end position="81"/>
    </location>
</feature>
<feature type="region of interest" description="Disordered" evidence="2">
    <location>
        <begin position="40"/>
        <end position="62"/>
    </location>
</feature>
<feature type="compositionally biased region" description="Basic residues" evidence="2">
    <location>
        <begin position="47"/>
        <end position="57"/>
    </location>
</feature>
<feature type="binding site" evidence="1">
    <location>
        <position position="18"/>
    </location>
    <ligand>
        <name>Zn(2+)</name>
        <dbReference type="ChEBI" id="CHEBI:29105"/>
    </ligand>
</feature>
<feature type="binding site" evidence="1">
    <location>
        <position position="21"/>
    </location>
    <ligand>
        <name>Zn(2+)</name>
        <dbReference type="ChEBI" id="CHEBI:29105"/>
    </ligand>
</feature>
<feature type="binding site" evidence="1">
    <location>
        <position position="78"/>
    </location>
    <ligand>
        <name>Zn(2+)</name>
        <dbReference type="ChEBI" id="CHEBI:29105"/>
    </ligand>
</feature>
<feature type="binding site" evidence="1">
    <location>
        <position position="81"/>
    </location>
    <ligand>
        <name>Zn(2+)</name>
        <dbReference type="ChEBI" id="CHEBI:29105"/>
    </ligand>
</feature>
<gene>
    <name evidence="1" type="primary">rpl44e</name>
    <name type="ordered locus">DKAM_0892</name>
</gene>
<comment type="function">
    <text evidence="1">Binds to the 23S rRNA.</text>
</comment>
<comment type="cofactor">
    <cofactor evidence="1">
        <name>Zn(2+)</name>
        <dbReference type="ChEBI" id="CHEBI:29105"/>
    </cofactor>
    <text evidence="1">Binds 1 zinc ion per subunit.</text>
</comment>
<comment type="subunit">
    <text evidence="1">Part of the 50S ribosomal subunit.</text>
</comment>
<comment type="similarity">
    <text evidence="1">Belongs to the eukaryotic ribosomal protein eL42 family.</text>
</comment>
<comment type="sequence caution" evidence="3">
    <conflict type="erroneous initiation">
        <sequence resource="EMBL-CDS" id="ACL11218"/>
    </conflict>
    <text>Truncated N-terminus.</text>
</comment>
<organism>
    <name type="scientific">Desulfurococcus amylolyticus (strain DSM 18924 / JCM 16383 / VKM B-2413 / 1221n)</name>
    <name type="common">Desulfurococcus kamchatkensis</name>
    <dbReference type="NCBI Taxonomy" id="490899"/>
    <lineage>
        <taxon>Archaea</taxon>
        <taxon>Thermoproteota</taxon>
        <taxon>Thermoprotei</taxon>
        <taxon>Desulfurococcales</taxon>
        <taxon>Desulfurococcaceae</taxon>
        <taxon>Desulfurococcus</taxon>
    </lineage>
</organism>
<dbReference type="EMBL" id="CP001140">
    <property type="protein sequence ID" value="ACL11218.1"/>
    <property type="status" value="ALT_INIT"/>
    <property type="molecule type" value="Genomic_DNA"/>
</dbReference>
<dbReference type="SMR" id="B8D537"/>
<dbReference type="STRING" id="490899.DKAM_0892"/>
<dbReference type="KEGG" id="dka:DKAM_0892"/>
<dbReference type="eggNOG" id="arCOG04109">
    <property type="taxonomic scope" value="Archaea"/>
</dbReference>
<dbReference type="HOGENOM" id="CLU_114645_3_0_2"/>
<dbReference type="Proteomes" id="UP000006903">
    <property type="component" value="Chromosome"/>
</dbReference>
<dbReference type="GO" id="GO:1990904">
    <property type="term" value="C:ribonucleoprotein complex"/>
    <property type="evidence" value="ECO:0007669"/>
    <property type="project" value="UniProtKB-KW"/>
</dbReference>
<dbReference type="GO" id="GO:0005840">
    <property type="term" value="C:ribosome"/>
    <property type="evidence" value="ECO:0007669"/>
    <property type="project" value="UniProtKB-KW"/>
</dbReference>
<dbReference type="GO" id="GO:0070180">
    <property type="term" value="F:large ribosomal subunit rRNA binding"/>
    <property type="evidence" value="ECO:0007669"/>
    <property type="project" value="UniProtKB-UniRule"/>
</dbReference>
<dbReference type="GO" id="GO:0003735">
    <property type="term" value="F:structural constituent of ribosome"/>
    <property type="evidence" value="ECO:0007669"/>
    <property type="project" value="InterPro"/>
</dbReference>
<dbReference type="GO" id="GO:0008270">
    <property type="term" value="F:zinc ion binding"/>
    <property type="evidence" value="ECO:0007669"/>
    <property type="project" value="UniProtKB-UniRule"/>
</dbReference>
<dbReference type="GO" id="GO:0006412">
    <property type="term" value="P:translation"/>
    <property type="evidence" value="ECO:0007669"/>
    <property type="project" value="UniProtKB-UniRule"/>
</dbReference>
<dbReference type="FunFam" id="3.10.450.80:FF:000001">
    <property type="entry name" value="60S ribosomal protein L44"/>
    <property type="match status" value="1"/>
</dbReference>
<dbReference type="Gene3D" id="3.10.450.80">
    <property type="match status" value="1"/>
</dbReference>
<dbReference type="HAMAP" id="MF_01476">
    <property type="entry name" value="Ribosomal_L44e"/>
    <property type="match status" value="1"/>
</dbReference>
<dbReference type="InterPro" id="IPR000552">
    <property type="entry name" value="Ribosomal_eL44"/>
</dbReference>
<dbReference type="InterPro" id="IPR053708">
    <property type="entry name" value="Ribosomal_LSU_eL42"/>
</dbReference>
<dbReference type="InterPro" id="IPR011332">
    <property type="entry name" value="Ribosomal_zn-bd"/>
</dbReference>
<dbReference type="NCBIfam" id="NF004425">
    <property type="entry name" value="PRK05767.1"/>
    <property type="match status" value="1"/>
</dbReference>
<dbReference type="PANTHER" id="PTHR10369">
    <property type="entry name" value="60S RIBOSOMAL PROTEIN L36A/L44"/>
    <property type="match status" value="1"/>
</dbReference>
<dbReference type="Pfam" id="PF00935">
    <property type="entry name" value="Ribosomal_L44"/>
    <property type="match status" value="1"/>
</dbReference>
<dbReference type="SUPFAM" id="SSF57829">
    <property type="entry name" value="Zn-binding ribosomal proteins"/>
    <property type="match status" value="1"/>
</dbReference>
<dbReference type="PROSITE" id="PS01172">
    <property type="entry name" value="RIBOSOMAL_L44E"/>
    <property type="match status" value="1"/>
</dbReference>
<protein>
    <recommendedName>
        <fullName evidence="1">Large ribosomal subunit protein eL42</fullName>
    </recommendedName>
    <alternativeName>
        <fullName evidence="3">50S ribosomal protein L44e</fullName>
    </alternativeName>
</protein>
<accession>B8D537</accession>
<name>RL44E_DESA1</name>